<protein>
    <recommendedName>
        <fullName evidence="1">UPF0370 protein YpfN</fullName>
    </recommendedName>
</protein>
<name>YPFN_ECOL6</name>
<feature type="chain" id="PRO_0000244544" description="UPF0370 protein YpfN">
    <location>
        <begin position="1"/>
        <end position="66"/>
    </location>
</feature>
<feature type="transmembrane region" description="Helical" evidence="1">
    <location>
        <begin position="4"/>
        <end position="24"/>
    </location>
</feature>
<feature type="region of interest" description="Disordered" evidence="2">
    <location>
        <begin position="39"/>
        <end position="66"/>
    </location>
</feature>
<feature type="compositionally biased region" description="Basic and acidic residues" evidence="2">
    <location>
        <begin position="42"/>
        <end position="51"/>
    </location>
</feature>
<organism>
    <name type="scientific">Escherichia coli O6:H1 (strain CFT073 / ATCC 700928 / UPEC)</name>
    <dbReference type="NCBI Taxonomy" id="199310"/>
    <lineage>
        <taxon>Bacteria</taxon>
        <taxon>Pseudomonadati</taxon>
        <taxon>Pseudomonadota</taxon>
        <taxon>Gammaproteobacteria</taxon>
        <taxon>Enterobacterales</taxon>
        <taxon>Enterobacteriaceae</taxon>
        <taxon>Escherichia</taxon>
    </lineage>
</organism>
<reference key="1">
    <citation type="journal article" date="2002" name="Proc. Natl. Acad. Sci. U.S.A.">
        <title>Extensive mosaic structure revealed by the complete genome sequence of uropathogenic Escherichia coli.</title>
        <authorList>
            <person name="Welch R.A."/>
            <person name="Burland V."/>
            <person name="Plunkett G. III"/>
            <person name="Redford P."/>
            <person name="Roesch P."/>
            <person name="Rasko D."/>
            <person name="Buckles E.L."/>
            <person name="Liou S.-R."/>
            <person name="Boutin A."/>
            <person name="Hackett J."/>
            <person name="Stroud D."/>
            <person name="Mayhew G.F."/>
            <person name="Rose D.J."/>
            <person name="Zhou S."/>
            <person name="Schwartz D.C."/>
            <person name="Perna N.T."/>
            <person name="Mobley H.L.T."/>
            <person name="Donnenberg M.S."/>
            <person name="Blattner F.R."/>
        </authorList>
    </citation>
    <scope>NUCLEOTIDE SEQUENCE [LARGE SCALE GENOMIC DNA]</scope>
    <source>
        <strain>CFT073 / ATCC 700928 / UPEC</strain>
    </source>
</reference>
<proteinExistence type="inferred from homology"/>
<keyword id="KW-1003">Cell membrane</keyword>
<keyword id="KW-0472">Membrane</keyword>
<keyword id="KW-1185">Reference proteome</keyword>
<keyword id="KW-0812">Transmembrane</keyword>
<keyword id="KW-1133">Transmembrane helix</keyword>
<evidence type="ECO:0000255" key="1">
    <source>
        <dbReference type="HAMAP-Rule" id="MF_01566"/>
    </source>
</evidence>
<evidence type="ECO:0000256" key="2">
    <source>
        <dbReference type="SAM" id="MobiDB-lite"/>
    </source>
</evidence>
<dbReference type="EMBL" id="AE014075">
    <property type="protein sequence ID" value="AAN81450.1"/>
    <property type="molecule type" value="Genomic_DNA"/>
</dbReference>
<dbReference type="PIR" id="D42959">
    <property type="entry name" value="D42959"/>
</dbReference>
<dbReference type="RefSeq" id="WP_000383836.1">
    <property type="nucleotide sequence ID" value="NZ_CP051263.1"/>
</dbReference>
<dbReference type="SMR" id="Q8FF81"/>
<dbReference type="STRING" id="199310.c3000"/>
<dbReference type="KEGG" id="ecc:c3000"/>
<dbReference type="eggNOG" id="ENOG5032YJI">
    <property type="taxonomic scope" value="Bacteria"/>
</dbReference>
<dbReference type="HOGENOM" id="CLU_198936_0_0_6"/>
<dbReference type="BioCyc" id="ECOL199310:C3000-MONOMER"/>
<dbReference type="Proteomes" id="UP000001410">
    <property type="component" value="Chromosome"/>
</dbReference>
<dbReference type="GO" id="GO:0005886">
    <property type="term" value="C:plasma membrane"/>
    <property type="evidence" value="ECO:0007669"/>
    <property type="project" value="UniProtKB-SubCell"/>
</dbReference>
<dbReference type="HAMAP" id="MF_01566">
    <property type="entry name" value="UPF0370"/>
    <property type="match status" value="1"/>
</dbReference>
<dbReference type="InterPro" id="IPR020910">
    <property type="entry name" value="UPF0370"/>
</dbReference>
<dbReference type="NCBIfam" id="NF010185">
    <property type="entry name" value="PRK13664.1"/>
    <property type="match status" value="1"/>
</dbReference>
<dbReference type="Pfam" id="PF13980">
    <property type="entry name" value="UPF0370"/>
    <property type="match status" value="1"/>
</dbReference>
<comment type="subcellular location">
    <subcellularLocation>
        <location evidence="1">Cell membrane</location>
        <topology evidence="1">Single-pass membrane protein</topology>
    </subcellularLocation>
</comment>
<comment type="similarity">
    <text evidence="1">Belongs to the UPF0370 family.</text>
</comment>
<gene>
    <name evidence="1" type="primary">ypfN</name>
    <name type="ordered locus">c3000</name>
</gene>
<accession>Q8FF81</accession>
<sequence>MDWLAKYWWILVIVFLVGVLLNVIKDLKRVDHKKFLANKPELPPHRDFNDKWDDDDDWPKKDQPKK</sequence>